<sequence>MNFNVWNVKEMLSIPSGSGITKPSNWNNNQTDCSLSDSQFLFGSQFCPENSETLLPSLDAGACLRHPKQTQQNSVDSEPSIFIKYQAKPQLLGGDTKDESLFSLPLPVGKSKGLSKQFEEKKRRATDQSDSETLHSFVSHFPEVINKLQTSVEKTEENLSSRSQSILDSVETIAKTFQETARVQHDLMVESVRDKGSMEQAILEIQRTCAARQAEFMEMKSTLKNLEVLVVEQTKNLQQFCDNLSQLIVPGILEELKKFTSVPQVAGHLKDSTSQTSPSLTQSLHFTRQEKHPSEEPATWQAQEAPAGNPSTSSQRPGECGVWDEGAESGVFQKAALPTDGLHRGDGHVKNKTVPTYCKNWVMTTRSVSNHFSNLPSQRAGNGQGLMAQGASQRDVSKFEARVKNACPEYGPQSMCSFDSLEQSATEQKGRPCRKRRRGKKQQPQRSKRGGLLDRKQGQTSKAACAFIARHHCPQSPVCDPQGPLICWLTPRSSTKSTCHILGGTGETSQTARAAQGNLVQHSQRSSTDSSSQGDQQINWFSDLSLENLEPPQCKKGGTNLLCDPDFDSSDDNF</sequence>
<feature type="chain" id="PRO_0000302876" description="Interactor of HORMAD1 protein 1">
    <location>
        <begin position="1"/>
        <end position="574"/>
    </location>
</feature>
<feature type="region of interest" description="Disordered" evidence="2">
    <location>
        <begin position="113"/>
        <end position="133"/>
    </location>
</feature>
<feature type="region of interest" description="Disordered" evidence="2">
    <location>
        <begin position="267"/>
        <end position="324"/>
    </location>
</feature>
<feature type="region of interest" description="Disordered" evidence="2">
    <location>
        <begin position="372"/>
        <end position="393"/>
    </location>
</feature>
<feature type="region of interest" description="Disordered" evidence="2">
    <location>
        <begin position="426"/>
        <end position="457"/>
    </location>
</feature>
<feature type="coiled-coil region" evidence="1">
    <location>
        <begin position="217"/>
        <end position="240"/>
    </location>
</feature>
<feature type="compositionally biased region" description="Basic and acidic residues" evidence="2">
    <location>
        <begin position="117"/>
        <end position="127"/>
    </location>
</feature>
<feature type="compositionally biased region" description="Low complexity" evidence="2">
    <location>
        <begin position="272"/>
        <end position="284"/>
    </location>
</feature>
<feature type="compositionally biased region" description="Polar residues" evidence="2">
    <location>
        <begin position="372"/>
        <end position="381"/>
    </location>
</feature>
<feature type="compositionally biased region" description="Basic residues" evidence="2">
    <location>
        <begin position="431"/>
        <end position="449"/>
    </location>
</feature>
<feature type="modified residue" description="Phosphoserine" evidence="10">
    <location>
        <position position="476"/>
    </location>
</feature>
<feature type="modified residue" description="Phosphoserine" evidence="10">
    <location>
        <position position="569"/>
    </location>
</feature>
<feature type="modified residue" description="Phosphoserine" evidence="10">
    <location>
        <position position="570"/>
    </location>
</feature>
<organism>
    <name type="scientific">Mus musculus</name>
    <name type="common">Mouse</name>
    <dbReference type="NCBI Taxonomy" id="10090"/>
    <lineage>
        <taxon>Eukaryota</taxon>
        <taxon>Metazoa</taxon>
        <taxon>Chordata</taxon>
        <taxon>Craniata</taxon>
        <taxon>Vertebrata</taxon>
        <taxon>Euteleostomi</taxon>
        <taxon>Mammalia</taxon>
        <taxon>Eutheria</taxon>
        <taxon>Euarchontoglires</taxon>
        <taxon>Glires</taxon>
        <taxon>Rodentia</taxon>
        <taxon>Myomorpha</taxon>
        <taxon>Muroidea</taxon>
        <taxon>Muridae</taxon>
        <taxon>Murinae</taxon>
        <taxon>Mus</taxon>
        <taxon>Mus</taxon>
    </lineage>
</organism>
<comment type="function">
    <text evidence="3">Required for DNA double-strand breaks (DSBs) formation in unsynapsed regions during meiotic recombination (PubMed:27723721). Probably acts by forming a complex with MEI4 and REC114, which activates DSBs formation in unsynapsed regions, an essential step to ensure completion of synapsis (PubMed:27723721). Not required for HORMAD1 functions in pairing-independent synaptonemal complex formation, ATR recruitment to unsynapsed axes, meiotic silencing of unsynapsed chromatin (MSUC) or meiotic surveillance (PubMed:27723721).</text>
</comment>
<comment type="subunit">
    <text evidence="3 4 5">Part of the MCD recombinosome complex, at least composed of IHO1, REC114 and MEI4 (PubMed:27723721, PubMed:30569039). Interacts with REC114 (PubMed:27723721). Interacts with MEI4 (PubMed:30569039). Interacts with HORMAD1 (PubMed:27723721). Interacts with ANKRD31 (PubMed:31000436).</text>
</comment>
<comment type="subcellular location">
    <subcellularLocation>
        <location evidence="3">Chromosome</location>
    </subcellularLocation>
    <text evidence="3">Specifically localizes to unsynapsed chromosomal regions during meiosis (PubMed:27723721). Appears on chromatin during preleptotene, when pre-meiotic replication occurs and axes have not yet developed (PubMed:27723721). Remains associated with unsynapsed axesn zygotene, when axes elongate and synapsis begins but disappears from synapsed axes (PubMed:27723721). Localization diverges in the two sexes beyond zygotene (PubMed:27723721). In spermatocytes, synapsis between the largely non-homologous X and Y chromosomes is mostly constrained to their short pseudoautosomal regions (PARs) (PubMed:27723721). At the zygotene-to-pachytene transition, high levels remain on unsynapsed sex chromosome axes but also on PARs (PubMed:27723721). However, by early pachytene disappears from both the synapsed and unsynapsed regions of sex chromosomes (PubMed:27723721). Reaccumulates on unsynapsed axes of sex chromosomes in mid-late pachytene and on desynapsing autosome axes in diplotene, but disappears from chromatin concomitant with axis disassembly after diplotene (PubMed:27723721). In oocytes, disappears from axes after all chromosomes synapsed and is undetectable on chromatin beyond zygotene (PubMed:27723721). Ovarian levels also dramatically decrease as oocytes progress to late prophase (PubMed:27723721). HORMAD1 is required for robust accumulation on chromatin and unsynapsed axes, suggesting that HORMAD1 recruits IHO1 to unsynapsed axes (PubMed:27723721).</text>
</comment>
<comment type="tissue specificity">
    <text evidence="3">Detected in spermatocytes and testis (at protein level) (PubMed:27723721).</text>
</comment>
<comment type="developmental stage">
    <text evidence="8">Meiosis-specific.</text>
</comment>
<comment type="disruption phenotype">
    <text evidence="3">Mice develop normally without obvious somatic defects but males and females are sterile due to defects in homologous synapsis (PubMed:27723721). Oocytes are depleted in six-week-old females and spermatocytes in males undergo apoptosis at a stage equivalent to wild-type mid-pachytene (PubMed:27723721). Complete synapsis is never observed and incomplete synaptonemal complexes are detected in meiocytes equivalent to late-zygotene and pachytene (PubMed:27723721).</text>
</comment>
<comment type="sequence caution" evidence="7">
    <conflict type="erroneous initiation">
        <sequence resource="EMBL-CDS" id="AAH58624"/>
    </conflict>
    <text>Truncated N-terminus.</text>
</comment>
<accession>Q6PDM4</accession>
<evidence type="ECO:0000255" key="1"/>
<evidence type="ECO:0000256" key="2">
    <source>
        <dbReference type="SAM" id="MobiDB-lite"/>
    </source>
</evidence>
<evidence type="ECO:0000269" key="3">
    <source>
    </source>
</evidence>
<evidence type="ECO:0000269" key="4">
    <source>
    </source>
</evidence>
<evidence type="ECO:0000269" key="5">
    <source>
    </source>
</evidence>
<evidence type="ECO:0000303" key="6">
    <source>
    </source>
</evidence>
<evidence type="ECO:0000305" key="7"/>
<evidence type="ECO:0000305" key="8">
    <source>
    </source>
</evidence>
<evidence type="ECO:0000312" key="9">
    <source>
        <dbReference type="MGI" id="MGI:3612242"/>
    </source>
</evidence>
<evidence type="ECO:0007744" key="10">
    <source>
    </source>
</evidence>
<name>IHO1_MOUSE</name>
<keyword id="KW-0158">Chromosome</keyword>
<keyword id="KW-0175">Coiled coil</keyword>
<keyword id="KW-0221">Differentiation</keyword>
<keyword id="KW-0233">DNA recombination</keyword>
<keyword id="KW-0469">Meiosis</keyword>
<keyword id="KW-0896">Oogenesis</keyword>
<keyword id="KW-0597">Phosphoprotein</keyword>
<keyword id="KW-1185">Reference proteome</keyword>
<keyword id="KW-0744">Spermatogenesis</keyword>
<dbReference type="EMBL" id="BC058624">
    <property type="protein sequence ID" value="AAH58624.1"/>
    <property type="status" value="ALT_INIT"/>
    <property type="molecule type" value="mRNA"/>
</dbReference>
<dbReference type="CCDS" id="CCDS57701.1"/>
<dbReference type="RefSeq" id="NP_001128670.1">
    <property type="nucleotide sequence ID" value="NM_001135198.2"/>
</dbReference>
<dbReference type="RefSeq" id="NP_001366587.1">
    <property type="nucleotide sequence ID" value="NM_001379658.1"/>
</dbReference>
<dbReference type="RefSeq" id="XP_006511823.1">
    <property type="nucleotide sequence ID" value="XM_006511760.1"/>
</dbReference>
<dbReference type="RefSeq" id="XP_006511827.1">
    <property type="nucleotide sequence ID" value="XM_006511764.1"/>
</dbReference>
<dbReference type="SASBDB" id="Q6PDM4"/>
<dbReference type="SMR" id="Q6PDM4"/>
<dbReference type="BioGRID" id="241805">
    <property type="interactions" value="2"/>
</dbReference>
<dbReference type="CORUM" id="Q6PDM4"/>
<dbReference type="FunCoup" id="Q6PDM4">
    <property type="interactions" value="164"/>
</dbReference>
<dbReference type="STRING" id="10090.ENSMUSP00000075898"/>
<dbReference type="iPTMnet" id="Q6PDM4"/>
<dbReference type="PhosphoSitePlus" id="Q6PDM4"/>
<dbReference type="PaxDb" id="10090-ENSMUSP00000075898"/>
<dbReference type="ProteomicsDB" id="266960"/>
<dbReference type="Antibodypedia" id="48985">
    <property type="antibodies" value="191 antibodies from 22 providers"/>
</dbReference>
<dbReference type="Ensembl" id="ENSMUST00000076592.4">
    <property type="protein sequence ID" value="ENSMUSP00000075898.3"/>
    <property type="gene ID" value="ENSMUSG00000047220.6"/>
</dbReference>
<dbReference type="GeneID" id="434438"/>
<dbReference type="KEGG" id="mmu:434438"/>
<dbReference type="UCSC" id="uc009rpl.2">
    <property type="organism name" value="mouse"/>
</dbReference>
<dbReference type="AGR" id="MGI:3612242"/>
<dbReference type="CTD" id="339834"/>
<dbReference type="MGI" id="MGI:3612242">
    <property type="gene designation" value="Iho1"/>
</dbReference>
<dbReference type="VEuPathDB" id="HostDB:ENSMUSG00000047220"/>
<dbReference type="eggNOG" id="ENOG502S0PR">
    <property type="taxonomic scope" value="Eukaryota"/>
</dbReference>
<dbReference type="GeneTree" id="ENSGT00390000012418"/>
<dbReference type="HOGENOM" id="CLU_034910_0_0_1"/>
<dbReference type="InParanoid" id="Q6PDM4"/>
<dbReference type="OMA" id="PGHVKDS"/>
<dbReference type="OrthoDB" id="10066605at2759"/>
<dbReference type="PhylomeDB" id="Q6PDM4"/>
<dbReference type="TreeFam" id="TF337135"/>
<dbReference type="BioGRID-ORCS" id="434438">
    <property type="hits" value="1 hit in 77 CRISPR screens"/>
</dbReference>
<dbReference type="ChiTaRS" id="Ccdc36">
    <property type="organism name" value="mouse"/>
</dbReference>
<dbReference type="PRO" id="PR:Q6PDM4"/>
<dbReference type="Proteomes" id="UP000000589">
    <property type="component" value="Chromosome 9"/>
</dbReference>
<dbReference type="RNAct" id="Q6PDM4">
    <property type="molecule type" value="protein"/>
</dbReference>
<dbReference type="Bgee" id="ENSMUSG00000047220">
    <property type="expression patterns" value="Expressed in mandible and 53 other cell types or tissues"/>
</dbReference>
<dbReference type="GO" id="GO:0000794">
    <property type="term" value="C:condensed nuclear chromosome"/>
    <property type="evidence" value="ECO:0000314"/>
    <property type="project" value="UniProtKB"/>
</dbReference>
<dbReference type="GO" id="GO:0006310">
    <property type="term" value="P:DNA recombination"/>
    <property type="evidence" value="ECO:0007669"/>
    <property type="project" value="UniProtKB-KW"/>
</dbReference>
<dbReference type="GO" id="GO:0007129">
    <property type="term" value="P:homologous chromosome pairing at meiosis"/>
    <property type="evidence" value="ECO:0000315"/>
    <property type="project" value="UniProtKB"/>
</dbReference>
<dbReference type="GO" id="GO:0042138">
    <property type="term" value="P:meiotic DNA double-strand break formation"/>
    <property type="evidence" value="ECO:0000315"/>
    <property type="project" value="UniProtKB"/>
</dbReference>
<dbReference type="GO" id="GO:0048477">
    <property type="term" value="P:oogenesis"/>
    <property type="evidence" value="ECO:0000315"/>
    <property type="project" value="UniProtKB"/>
</dbReference>
<dbReference type="GO" id="GO:0060629">
    <property type="term" value="P:regulation of homologous chromosome segregation"/>
    <property type="evidence" value="ECO:0000315"/>
    <property type="project" value="UniProtKB"/>
</dbReference>
<dbReference type="GO" id="GO:0007283">
    <property type="term" value="P:spermatogenesis"/>
    <property type="evidence" value="ECO:0000315"/>
    <property type="project" value="UniProtKB"/>
</dbReference>
<dbReference type="InterPro" id="IPR031529">
    <property type="entry name" value="IHO1"/>
</dbReference>
<dbReference type="PANTHER" id="PTHR35662">
    <property type="entry name" value="INTERACTOR OF HORMAD1 PROTEIN 1"/>
    <property type="match status" value="1"/>
</dbReference>
<dbReference type="PANTHER" id="PTHR35662:SF1">
    <property type="entry name" value="INTERACTOR OF HORMAD1 PROTEIN 1"/>
    <property type="match status" value="1"/>
</dbReference>
<dbReference type="Pfam" id="PF15771">
    <property type="entry name" value="IHO1"/>
    <property type="match status" value="1"/>
</dbReference>
<gene>
    <name evidence="6 9" type="primary">Iho1</name>
    <name evidence="9" type="synonym">Ccdc36</name>
</gene>
<proteinExistence type="evidence at protein level"/>
<reference key="1">
    <citation type="journal article" date="2004" name="Genome Res.">
        <title>The status, quality, and expansion of the NIH full-length cDNA project: the Mammalian Gene Collection (MGC).</title>
        <authorList>
            <consortium name="The MGC Project Team"/>
        </authorList>
    </citation>
    <scope>NUCLEOTIDE SEQUENCE [LARGE SCALE MRNA]</scope>
    <source>
        <strain>C57BL/6J</strain>
    </source>
</reference>
<reference key="2">
    <citation type="journal article" date="2010" name="Cell">
        <title>A tissue-specific atlas of mouse protein phosphorylation and expression.</title>
        <authorList>
            <person name="Huttlin E.L."/>
            <person name="Jedrychowski M.P."/>
            <person name="Elias J.E."/>
            <person name="Goswami T."/>
            <person name="Rad R."/>
            <person name="Beausoleil S.A."/>
            <person name="Villen J."/>
            <person name="Haas W."/>
            <person name="Sowa M.E."/>
            <person name="Gygi S.P."/>
        </authorList>
    </citation>
    <scope>PHOSPHORYLATION [LARGE SCALE ANALYSIS] AT SER-476; SER-569 AND SER-570</scope>
    <scope>IDENTIFICATION BY MASS SPECTROMETRY [LARGE SCALE ANALYSIS]</scope>
    <source>
        <tissue>Testis</tissue>
    </source>
</reference>
<reference key="3">
    <citation type="journal article" date="2016" name="Nat. Cell Biol.">
        <title>Meiotic DNA break formation requires the unsynapsed chromosome axis-binding protein IHO1 (CCDC36) in mice.</title>
        <authorList>
            <person name="Stanzione M."/>
            <person name="Baumann M."/>
            <person name="Papanikos F."/>
            <person name="Dereli I."/>
            <person name="Lange J."/>
            <person name="Ramlal A."/>
            <person name="Traenkner D."/>
            <person name="Shibuya H."/>
            <person name="de Massy B."/>
            <person name="Watanabe Y."/>
            <person name="Jasin M."/>
            <person name="Keeney S."/>
            <person name="Toth A."/>
        </authorList>
    </citation>
    <scope>FUNCTION</scope>
    <scope>SUBCELLULAR LOCATION</scope>
    <scope>TISSUE SPECIFICITY</scope>
    <scope>DEVELOPMENTAL STAGE</scope>
    <scope>DISRUPTION PHENOTYPE</scope>
    <scope>INTERACTION WITH HORMAD1 AND REC114</scope>
    <scope>IDENTIFICATION IN THE MCD RECOMBINOSOME COMPLEX</scope>
</reference>
<reference key="4">
    <citation type="journal article" date="2018" name="Life. Sci Alliance">
        <title>Mouse REC114 is essential for meiotic DNA double-strand break formation and forms a complex with MEI4.</title>
        <authorList>
            <person name="Kumar R."/>
            <person name="Oliver C."/>
            <person name="Brun C."/>
            <person name="Juarez-Martinez A.B."/>
            <person name="Tarabay Y."/>
            <person name="Kadlec J."/>
            <person name="de Massy B."/>
        </authorList>
    </citation>
    <scope>IDENTIFICATION IN A COMPLEX WITH REC114 AND MEI4</scope>
    <scope>INTERACTION WITH MEI4</scope>
</reference>
<reference key="5">
    <citation type="journal article" date="2019" name="Mol. Cell">
        <title>Mouse ANKRD31 regulates spatiotemporal patterning of meiotic recombination initiation and ensures recombination between X and Y sex chromosomes.</title>
        <authorList>
            <person name="Papanikos F."/>
            <person name="Clement J.A.J."/>
            <person name="Testa E."/>
            <person name="Ravindranathan R."/>
            <person name="Grey C."/>
            <person name="Dereli I."/>
            <person name="Bondarieva A."/>
            <person name="Valerio-Cabrera S."/>
            <person name="Stanzione M."/>
            <person name="Schleiffer A."/>
            <person name="Jansa P."/>
            <person name="Lustyk D."/>
            <person name="Fei J.F."/>
            <person name="Adams I.R."/>
            <person name="Forejt J."/>
            <person name="Barchi M."/>
            <person name="de Massy B."/>
            <person name="Toth A."/>
        </authorList>
    </citation>
    <scope>INTERACTION WITH ANKRD31</scope>
</reference>
<protein>
    <recommendedName>
        <fullName evidence="6">Interactor of HORMAD1 protein 1</fullName>
    </recommendedName>
    <alternativeName>
        <fullName evidence="9">Coiled-coil domain-containing protein 36</fullName>
    </alternativeName>
</protein>